<dbReference type="EMBL" id="AF107203">
    <property type="protein sequence ID" value="AAF78291.1"/>
    <property type="status" value="ALT_INIT"/>
    <property type="molecule type" value="mRNA"/>
</dbReference>
<dbReference type="EMBL" id="AF229057">
    <property type="protein sequence ID" value="AAL71904.1"/>
    <property type="molecule type" value="mRNA"/>
</dbReference>
<dbReference type="EMBL" id="AF094849">
    <property type="protein sequence ID" value="AAL83405.1"/>
    <property type="molecule type" value="mRNA"/>
</dbReference>
<dbReference type="EMBL" id="AF109106">
    <property type="protein sequence ID" value="AAL83406.1"/>
    <property type="molecule type" value="mRNA"/>
</dbReference>
<dbReference type="EMBL" id="AF109120">
    <property type="protein sequence ID" value="AAL83407.1"/>
    <property type="molecule type" value="Genomic_DNA"/>
</dbReference>
<dbReference type="EMBL" id="AF109107">
    <property type="protein sequence ID" value="AAL83407.1"/>
    <property type="status" value="JOINED"/>
    <property type="molecule type" value="Genomic_DNA"/>
</dbReference>
<dbReference type="EMBL" id="AF109108">
    <property type="protein sequence ID" value="AAL83407.1"/>
    <property type="status" value="JOINED"/>
    <property type="molecule type" value="Genomic_DNA"/>
</dbReference>
<dbReference type="EMBL" id="AF109109">
    <property type="protein sequence ID" value="AAL83407.1"/>
    <property type="status" value="JOINED"/>
    <property type="molecule type" value="Genomic_DNA"/>
</dbReference>
<dbReference type="EMBL" id="AF109110">
    <property type="protein sequence ID" value="AAL83407.1"/>
    <property type="status" value="JOINED"/>
    <property type="molecule type" value="Genomic_DNA"/>
</dbReference>
<dbReference type="EMBL" id="AF109111">
    <property type="protein sequence ID" value="AAL83407.1"/>
    <property type="status" value="JOINED"/>
    <property type="molecule type" value="Genomic_DNA"/>
</dbReference>
<dbReference type="EMBL" id="AF109112">
    <property type="protein sequence ID" value="AAL83407.1"/>
    <property type="status" value="JOINED"/>
    <property type="molecule type" value="Genomic_DNA"/>
</dbReference>
<dbReference type="EMBL" id="AF109113">
    <property type="protein sequence ID" value="AAL83407.1"/>
    <property type="status" value="JOINED"/>
    <property type="molecule type" value="Genomic_DNA"/>
</dbReference>
<dbReference type="EMBL" id="AF109114">
    <property type="protein sequence ID" value="AAL83407.1"/>
    <property type="status" value="JOINED"/>
    <property type="molecule type" value="Genomic_DNA"/>
</dbReference>
<dbReference type="EMBL" id="AF109115">
    <property type="protein sequence ID" value="AAL83407.1"/>
    <property type="status" value="JOINED"/>
    <property type="molecule type" value="Genomic_DNA"/>
</dbReference>
<dbReference type="EMBL" id="AF109116">
    <property type="protein sequence ID" value="AAL83407.1"/>
    <property type="status" value="JOINED"/>
    <property type="molecule type" value="Genomic_DNA"/>
</dbReference>
<dbReference type="EMBL" id="AF109117">
    <property type="protein sequence ID" value="AAL83407.1"/>
    <property type="status" value="JOINED"/>
    <property type="molecule type" value="Genomic_DNA"/>
</dbReference>
<dbReference type="EMBL" id="AF109118">
    <property type="protein sequence ID" value="AAL83407.1"/>
    <property type="status" value="JOINED"/>
    <property type="molecule type" value="Genomic_DNA"/>
</dbReference>
<dbReference type="EMBL" id="AF109119">
    <property type="protein sequence ID" value="AAL83407.1"/>
    <property type="status" value="JOINED"/>
    <property type="molecule type" value="Genomic_DNA"/>
</dbReference>
<dbReference type="EMBL" id="AF109120">
    <property type="protein sequence ID" value="AAL83408.1"/>
    <property type="molecule type" value="Genomic_DNA"/>
</dbReference>
<dbReference type="EMBL" id="AF109107">
    <property type="protein sequence ID" value="AAL83408.1"/>
    <property type="status" value="JOINED"/>
    <property type="molecule type" value="Genomic_DNA"/>
</dbReference>
<dbReference type="EMBL" id="AF109108">
    <property type="protein sequence ID" value="AAL83408.1"/>
    <property type="status" value="JOINED"/>
    <property type="molecule type" value="Genomic_DNA"/>
</dbReference>
<dbReference type="EMBL" id="AF109109">
    <property type="protein sequence ID" value="AAL83408.1"/>
    <property type="status" value="JOINED"/>
    <property type="molecule type" value="Genomic_DNA"/>
</dbReference>
<dbReference type="EMBL" id="AF109110">
    <property type="protein sequence ID" value="AAL83408.1"/>
    <property type="status" value="JOINED"/>
    <property type="molecule type" value="Genomic_DNA"/>
</dbReference>
<dbReference type="EMBL" id="AF109111">
    <property type="protein sequence ID" value="AAL83408.1"/>
    <property type="status" value="JOINED"/>
    <property type="molecule type" value="Genomic_DNA"/>
</dbReference>
<dbReference type="EMBL" id="AF109112">
    <property type="protein sequence ID" value="AAL83408.1"/>
    <property type="status" value="JOINED"/>
    <property type="molecule type" value="Genomic_DNA"/>
</dbReference>
<dbReference type="EMBL" id="AF109113">
    <property type="protein sequence ID" value="AAL83408.1"/>
    <property type="status" value="JOINED"/>
    <property type="molecule type" value="Genomic_DNA"/>
</dbReference>
<dbReference type="EMBL" id="AF109114">
    <property type="protein sequence ID" value="AAL83408.1"/>
    <property type="status" value="JOINED"/>
    <property type="molecule type" value="Genomic_DNA"/>
</dbReference>
<dbReference type="EMBL" id="AF109115">
    <property type="protein sequence ID" value="AAL83408.1"/>
    <property type="status" value="JOINED"/>
    <property type="molecule type" value="Genomic_DNA"/>
</dbReference>
<dbReference type="EMBL" id="AF109116">
    <property type="protein sequence ID" value="AAL83408.1"/>
    <property type="status" value="JOINED"/>
    <property type="molecule type" value="Genomic_DNA"/>
</dbReference>
<dbReference type="EMBL" id="AF109117">
    <property type="protein sequence ID" value="AAL83408.1"/>
    <property type="status" value="JOINED"/>
    <property type="molecule type" value="Genomic_DNA"/>
</dbReference>
<dbReference type="EMBL" id="AF109119">
    <property type="protein sequence ID" value="AAL83408.1"/>
    <property type="status" value="JOINED"/>
    <property type="molecule type" value="Genomic_DNA"/>
</dbReference>
<dbReference type="EMBL" id="AF109120">
    <property type="protein sequence ID" value="AAL83409.1"/>
    <property type="molecule type" value="Genomic_DNA"/>
</dbReference>
<dbReference type="EMBL" id="AF109107">
    <property type="protein sequence ID" value="AAL83409.1"/>
    <property type="status" value="JOINED"/>
    <property type="molecule type" value="Genomic_DNA"/>
</dbReference>
<dbReference type="EMBL" id="AF109108">
    <property type="protein sequence ID" value="AAL83409.1"/>
    <property type="status" value="JOINED"/>
    <property type="molecule type" value="Genomic_DNA"/>
</dbReference>
<dbReference type="EMBL" id="AF109109">
    <property type="protein sequence ID" value="AAL83409.1"/>
    <property type="status" value="JOINED"/>
    <property type="molecule type" value="Genomic_DNA"/>
</dbReference>
<dbReference type="EMBL" id="AF109110">
    <property type="protein sequence ID" value="AAL83409.1"/>
    <property type="status" value="JOINED"/>
    <property type="molecule type" value="Genomic_DNA"/>
</dbReference>
<dbReference type="EMBL" id="AF109111">
    <property type="protein sequence ID" value="AAL83409.1"/>
    <property type="status" value="JOINED"/>
    <property type="molecule type" value="Genomic_DNA"/>
</dbReference>
<dbReference type="EMBL" id="AF109112">
    <property type="protein sequence ID" value="AAL83409.1"/>
    <property type="status" value="JOINED"/>
    <property type="molecule type" value="Genomic_DNA"/>
</dbReference>
<dbReference type="EMBL" id="AF109113">
    <property type="protein sequence ID" value="AAL83409.1"/>
    <property type="status" value="JOINED"/>
    <property type="molecule type" value="Genomic_DNA"/>
</dbReference>
<dbReference type="EMBL" id="AF109114">
    <property type="protein sequence ID" value="AAL83409.1"/>
    <property type="status" value="JOINED"/>
    <property type="molecule type" value="Genomic_DNA"/>
</dbReference>
<dbReference type="EMBL" id="AF109115">
    <property type="protein sequence ID" value="AAL83409.1"/>
    <property type="status" value="JOINED"/>
    <property type="molecule type" value="Genomic_DNA"/>
</dbReference>
<dbReference type="EMBL" id="AF109116">
    <property type="protein sequence ID" value="AAL83409.1"/>
    <property type="status" value="JOINED"/>
    <property type="molecule type" value="Genomic_DNA"/>
</dbReference>
<dbReference type="EMBL" id="AF109117">
    <property type="protein sequence ID" value="AAL83409.1"/>
    <property type="status" value="JOINED"/>
    <property type="molecule type" value="Genomic_DNA"/>
</dbReference>
<dbReference type="EMBL" id="AF109119">
    <property type="protein sequence ID" value="AAL83409.1"/>
    <property type="status" value="JOINED"/>
    <property type="molecule type" value="Genomic_DNA"/>
</dbReference>
<dbReference type="EMBL" id="AF448859">
    <property type="protein sequence ID" value="AAP41925.1"/>
    <property type="molecule type" value="mRNA"/>
</dbReference>
<dbReference type="EMBL" id="AK001027">
    <property type="protein sequence ID" value="BAA91472.1"/>
    <property type="molecule type" value="mRNA"/>
</dbReference>
<dbReference type="EMBL" id="AC005774">
    <property type="status" value="NOT_ANNOTATED_CDS"/>
    <property type="molecule type" value="Genomic_DNA"/>
</dbReference>
<dbReference type="EMBL" id="AC006075">
    <property type="status" value="NOT_ANNOTATED_CDS"/>
    <property type="molecule type" value="Genomic_DNA"/>
</dbReference>
<dbReference type="EMBL" id="AC006112">
    <property type="status" value="NOT_ANNOTATED_CDS"/>
    <property type="molecule type" value="Genomic_DNA"/>
</dbReference>
<dbReference type="EMBL" id="AC007012">
    <property type="status" value="NOT_ANNOTATED_CDS"/>
    <property type="molecule type" value="Genomic_DNA"/>
</dbReference>
<dbReference type="EMBL" id="AC007217">
    <property type="status" value="NOT_ANNOTATED_CDS"/>
    <property type="molecule type" value="Genomic_DNA"/>
</dbReference>
<dbReference type="EMBL" id="AC007222">
    <property type="status" value="NOT_ANNOTATED_CDS"/>
    <property type="molecule type" value="Genomic_DNA"/>
</dbReference>
<dbReference type="EMBL" id="AC007223">
    <property type="status" value="NOT_ANNOTATED_CDS"/>
    <property type="molecule type" value="Genomic_DNA"/>
</dbReference>
<dbReference type="EMBL" id="AC009135">
    <property type="status" value="NOT_ANNOTATED_CDS"/>
    <property type="molecule type" value="Genomic_DNA"/>
</dbReference>
<dbReference type="EMBL" id="AC022206">
    <property type="status" value="NOT_ANNOTATED_CDS"/>
    <property type="molecule type" value="Genomic_DNA"/>
</dbReference>
<dbReference type="EMBL" id="AC023829">
    <property type="status" value="NOT_ANNOTATED_CDS"/>
    <property type="molecule type" value="Genomic_DNA"/>
</dbReference>
<dbReference type="EMBL" id="AC027683">
    <property type="status" value="NOT_ANNOTATED_CDS"/>
    <property type="molecule type" value="Genomic_DNA"/>
</dbReference>
<dbReference type="EMBL" id="AC079410">
    <property type="status" value="NOT_ANNOTATED_CDS"/>
    <property type="molecule type" value="Genomic_DNA"/>
</dbReference>
<dbReference type="EMBL" id="AC125796">
    <property type="status" value="NOT_ANNOTATED_CDS"/>
    <property type="molecule type" value="Genomic_DNA"/>
</dbReference>
<dbReference type="EMBL" id="AC131390">
    <property type="status" value="NOT_ANNOTATED_CDS"/>
    <property type="molecule type" value="Genomic_DNA"/>
</dbReference>
<dbReference type="EMBL" id="BC113691">
    <property type="protein sequence ID" value="AAI13692.1"/>
    <property type="molecule type" value="mRNA"/>
</dbReference>
<dbReference type="CCDS" id="CCDS10531.1">
    <molecule id="Q9NWB1-2"/>
</dbReference>
<dbReference type="CCDS" id="CCDS10532.1">
    <molecule id="Q9NWB1-5"/>
</dbReference>
<dbReference type="CCDS" id="CCDS45405.1">
    <molecule id="Q9NWB1-4"/>
</dbReference>
<dbReference type="CCDS" id="CCDS55983.1">
    <molecule id="Q9NWB1-1"/>
</dbReference>
<dbReference type="CCDS" id="CCDS55984.1">
    <molecule id="Q9NWB1-3"/>
</dbReference>
<dbReference type="RefSeq" id="NP_001135805.1">
    <molecule id="Q9NWB1-3"/>
    <property type="nucleotide sequence ID" value="NM_001142333.2"/>
</dbReference>
<dbReference type="RefSeq" id="NP_001135806.1">
    <molecule id="Q9NWB1-1"/>
    <property type="nucleotide sequence ID" value="NM_001142334.2"/>
</dbReference>
<dbReference type="RefSeq" id="NP_061193.2">
    <molecule id="Q9NWB1-1"/>
    <property type="nucleotide sequence ID" value="NM_018723.3"/>
</dbReference>
<dbReference type="RefSeq" id="NP_665898.1">
    <molecule id="Q9NWB1-2"/>
    <property type="nucleotide sequence ID" value="NM_145891.3"/>
</dbReference>
<dbReference type="RefSeq" id="NP_665899.1">
    <molecule id="Q9NWB1-4"/>
    <property type="nucleotide sequence ID" value="NM_145892.3"/>
</dbReference>
<dbReference type="RefSeq" id="NP_665900.1">
    <molecule id="Q9NWB1-5"/>
    <property type="nucleotide sequence ID" value="NM_145893.3"/>
</dbReference>
<dbReference type="RefSeq" id="XP_016878822.1">
    <property type="nucleotide sequence ID" value="XM_017023333.1"/>
</dbReference>
<dbReference type="RefSeq" id="XP_016878827.1">
    <property type="nucleotide sequence ID" value="XM_017023338.1"/>
</dbReference>
<dbReference type="PDB" id="2ERR">
    <property type="method" value="NMR"/>
    <property type="chains" value="A=109-196"/>
</dbReference>
<dbReference type="PDB" id="2N82">
    <property type="method" value="NMR"/>
    <property type="chains" value="B=109-208"/>
</dbReference>
<dbReference type="PDB" id="4ZKA">
    <property type="method" value="X-ray"/>
    <property type="resolution" value="1.80 A"/>
    <property type="chains" value="A/B/C/D/E/F=109-208"/>
</dbReference>
<dbReference type="PDB" id="7VRL">
    <property type="method" value="NMR"/>
    <property type="chains" value="B=109-208"/>
</dbReference>
<dbReference type="PDBsum" id="2ERR"/>
<dbReference type="PDBsum" id="2N82"/>
<dbReference type="PDBsum" id="4ZKA"/>
<dbReference type="PDBsum" id="7VRL"/>
<dbReference type="BMRB" id="Q9NWB1"/>
<dbReference type="SMR" id="Q9NWB1"/>
<dbReference type="BioGRID" id="120107">
    <property type="interactions" value="99"/>
</dbReference>
<dbReference type="FunCoup" id="Q9NWB1">
    <property type="interactions" value="1118"/>
</dbReference>
<dbReference type="IntAct" id="Q9NWB1">
    <property type="interactions" value="86"/>
</dbReference>
<dbReference type="MINT" id="Q9NWB1"/>
<dbReference type="STRING" id="9606.ENSP00000391269"/>
<dbReference type="GlyGen" id="Q9NWB1">
    <property type="glycosylation" value="2 sites"/>
</dbReference>
<dbReference type="iPTMnet" id="Q9NWB1"/>
<dbReference type="PhosphoSitePlus" id="Q9NWB1"/>
<dbReference type="BioMuta" id="RBFOX1"/>
<dbReference type="DMDM" id="166897979"/>
<dbReference type="jPOST" id="Q9NWB1"/>
<dbReference type="MassIVE" id="Q9NWB1"/>
<dbReference type="PaxDb" id="9606-ENSP00000309117"/>
<dbReference type="PeptideAtlas" id="Q9NWB1"/>
<dbReference type="ProteomicsDB" id="82917">
    <molecule id="Q9NWB1-1"/>
</dbReference>
<dbReference type="ProteomicsDB" id="82918">
    <molecule id="Q9NWB1-2"/>
</dbReference>
<dbReference type="ProteomicsDB" id="82919">
    <molecule id="Q9NWB1-3"/>
</dbReference>
<dbReference type="ProteomicsDB" id="82920">
    <molecule id="Q9NWB1-4"/>
</dbReference>
<dbReference type="ProteomicsDB" id="82921">
    <molecule id="Q9NWB1-5"/>
</dbReference>
<dbReference type="Pumba" id="Q9NWB1"/>
<dbReference type="Antibodypedia" id="24505">
    <property type="antibodies" value="391 antibodies from 32 providers"/>
</dbReference>
<dbReference type="DNASU" id="54715"/>
<dbReference type="Ensembl" id="ENST00000311745.9">
    <molecule id="Q9NWB1-2"/>
    <property type="protein sequence ID" value="ENSP00000309117.5"/>
    <property type="gene ID" value="ENSG00000078328.23"/>
</dbReference>
<dbReference type="Ensembl" id="ENST00000355637.9">
    <molecule id="Q9NWB1-5"/>
    <property type="protein sequence ID" value="ENSP00000347855.4"/>
    <property type="gene ID" value="ENSG00000078328.23"/>
</dbReference>
<dbReference type="Ensembl" id="ENST00000436368.6">
    <molecule id="Q9NWB1-4"/>
    <property type="protein sequence ID" value="ENSP00000402745.2"/>
    <property type="gene ID" value="ENSG00000078328.23"/>
</dbReference>
<dbReference type="Ensembl" id="ENST00000547338.5">
    <molecule id="Q9NWB1-1"/>
    <property type="protein sequence ID" value="ENSP00000447717.1"/>
    <property type="gene ID" value="ENSG00000078328.23"/>
</dbReference>
<dbReference type="Ensembl" id="ENST00000550418.6">
    <molecule id="Q9NWB1-1"/>
    <property type="protein sequence ID" value="ENSP00000450031.1"/>
    <property type="gene ID" value="ENSG00000078328.23"/>
</dbReference>
<dbReference type="Ensembl" id="ENST00000553186.5">
    <molecule id="Q9NWB1-3"/>
    <property type="protein sequence ID" value="ENSP00000447753.1"/>
    <property type="gene ID" value="ENSG00000078328.23"/>
</dbReference>
<dbReference type="Ensembl" id="ENST00000675653.1">
    <molecule id="Q9NWB1-1"/>
    <property type="protein sequence ID" value="ENSP00000502718.1"/>
    <property type="gene ID" value="ENSG00000078328.23"/>
</dbReference>
<dbReference type="Ensembl" id="ENST00000675842.1">
    <molecule id="Q9NWB1-1"/>
    <property type="protein sequence ID" value="ENSP00000501599.1"/>
    <property type="gene ID" value="ENSG00000078328.23"/>
</dbReference>
<dbReference type="GeneID" id="54715"/>
<dbReference type="KEGG" id="hsa:54715"/>
<dbReference type="MANE-Select" id="ENST00000550418.6">
    <property type="protein sequence ID" value="ENSP00000450031.1"/>
    <property type="RefSeq nucleotide sequence ID" value="NM_018723.4"/>
    <property type="RefSeq protein sequence ID" value="NP_061193.2"/>
</dbReference>
<dbReference type="UCSC" id="uc002cys.2">
    <molecule id="Q9NWB1-1"/>
    <property type="organism name" value="human"/>
</dbReference>
<dbReference type="AGR" id="HGNC:18222"/>
<dbReference type="CTD" id="54715"/>
<dbReference type="DisGeNET" id="54715"/>
<dbReference type="GeneCards" id="RBFOX1"/>
<dbReference type="HGNC" id="HGNC:18222">
    <property type="gene designation" value="RBFOX1"/>
</dbReference>
<dbReference type="HPA" id="ENSG00000078328">
    <property type="expression patterns" value="Tissue enhanced (brain, skeletal muscle, tongue)"/>
</dbReference>
<dbReference type="MalaCards" id="RBFOX1"/>
<dbReference type="MIM" id="605104">
    <property type="type" value="gene"/>
</dbReference>
<dbReference type="neXtProt" id="NX_Q9NWB1"/>
<dbReference type="OpenTargets" id="ENSG00000078328"/>
<dbReference type="VEuPathDB" id="HostDB:ENSG00000078328"/>
<dbReference type="eggNOG" id="KOG0125">
    <property type="taxonomic scope" value="Eukaryota"/>
</dbReference>
<dbReference type="GeneTree" id="ENSGT00940000160685"/>
<dbReference type="InParanoid" id="Q9NWB1"/>
<dbReference type="OMA" id="LNMYPPT"/>
<dbReference type="OrthoDB" id="5382468at2759"/>
<dbReference type="PAN-GO" id="Q9NWB1">
    <property type="GO annotations" value="5 GO annotations based on evolutionary models"/>
</dbReference>
<dbReference type="PhylomeDB" id="Q9NWB1"/>
<dbReference type="TreeFam" id="TF315942"/>
<dbReference type="PathwayCommons" id="Q9NWB1"/>
<dbReference type="Reactome" id="R-HSA-9022707">
    <property type="pathway name" value="MECP2 regulates transcription factors"/>
</dbReference>
<dbReference type="SignaLink" id="Q9NWB1"/>
<dbReference type="SIGNOR" id="Q9NWB1"/>
<dbReference type="BioGRID-ORCS" id="54715">
    <property type="hits" value="11 hits in 1146 CRISPR screens"/>
</dbReference>
<dbReference type="CD-CODE" id="804901D1">
    <property type="entry name" value="Nuclear speckle"/>
</dbReference>
<dbReference type="CD-CODE" id="DEE660B4">
    <property type="entry name" value="Stress granule"/>
</dbReference>
<dbReference type="ChiTaRS" id="RBFOX1">
    <property type="organism name" value="human"/>
</dbReference>
<dbReference type="EvolutionaryTrace" id="Q9NWB1"/>
<dbReference type="GeneWiki" id="RBFOX1"/>
<dbReference type="GenomeRNAi" id="54715"/>
<dbReference type="Pharos" id="Q9NWB1">
    <property type="development level" value="Tbio"/>
</dbReference>
<dbReference type="PRO" id="PR:Q9NWB1"/>
<dbReference type="Proteomes" id="UP000005640">
    <property type="component" value="Chromosome 16"/>
</dbReference>
<dbReference type="RNAct" id="Q9NWB1">
    <property type="molecule type" value="protein"/>
</dbReference>
<dbReference type="Bgee" id="ENSG00000078328">
    <property type="expression patterns" value="Expressed in middle temporal gyrus and 172 other cell types or tissues"/>
</dbReference>
<dbReference type="ExpressionAtlas" id="Q9NWB1">
    <property type="expression patterns" value="baseline and differential"/>
</dbReference>
<dbReference type="GO" id="GO:0005737">
    <property type="term" value="C:cytoplasm"/>
    <property type="evidence" value="ECO:0000314"/>
    <property type="project" value="UniProtKB"/>
</dbReference>
<dbReference type="GO" id="GO:0010494">
    <property type="term" value="C:cytoplasmic stress granule"/>
    <property type="evidence" value="ECO:0000314"/>
    <property type="project" value="FlyBase"/>
</dbReference>
<dbReference type="GO" id="GO:0097165">
    <property type="term" value="C:nuclear stress granule"/>
    <property type="evidence" value="ECO:0000314"/>
    <property type="project" value="FlyBase"/>
</dbReference>
<dbReference type="GO" id="GO:0005634">
    <property type="term" value="C:nucleus"/>
    <property type="evidence" value="ECO:0000318"/>
    <property type="project" value="GO_Central"/>
</dbReference>
<dbReference type="GO" id="GO:0005802">
    <property type="term" value="C:trans-Golgi network"/>
    <property type="evidence" value="ECO:0000314"/>
    <property type="project" value="UniProtKB"/>
</dbReference>
<dbReference type="GO" id="GO:0003729">
    <property type="term" value="F:mRNA binding"/>
    <property type="evidence" value="ECO:0000318"/>
    <property type="project" value="GO_Central"/>
</dbReference>
<dbReference type="GO" id="GO:0003723">
    <property type="term" value="F:RNA binding"/>
    <property type="evidence" value="ECO:0000303"/>
    <property type="project" value="UniProtKB"/>
</dbReference>
<dbReference type="GO" id="GO:0006397">
    <property type="term" value="P:mRNA processing"/>
    <property type="evidence" value="ECO:0007669"/>
    <property type="project" value="UniProtKB-KW"/>
</dbReference>
<dbReference type="GO" id="GO:0007399">
    <property type="term" value="P:nervous system development"/>
    <property type="evidence" value="ECO:0000318"/>
    <property type="project" value="GO_Central"/>
</dbReference>
<dbReference type="GO" id="GO:0000381">
    <property type="term" value="P:regulation of alternative mRNA splicing, via spliceosome"/>
    <property type="evidence" value="ECO:0000318"/>
    <property type="project" value="GO_Central"/>
</dbReference>
<dbReference type="GO" id="GO:0008380">
    <property type="term" value="P:RNA splicing"/>
    <property type="evidence" value="ECO:0007669"/>
    <property type="project" value="UniProtKB-KW"/>
</dbReference>
<dbReference type="GO" id="GO:0050658">
    <property type="term" value="P:RNA transport"/>
    <property type="evidence" value="ECO:0000303"/>
    <property type="project" value="UniProtKB"/>
</dbReference>
<dbReference type="CDD" id="cd12407">
    <property type="entry name" value="RRM_FOX1_like"/>
    <property type="match status" value="1"/>
</dbReference>
<dbReference type="FunFam" id="3.30.70.330:FF:000375">
    <property type="entry name" value="RNA binding fox-1 homolog 1"/>
    <property type="match status" value="1"/>
</dbReference>
<dbReference type="Gene3D" id="3.30.70.330">
    <property type="match status" value="1"/>
</dbReference>
<dbReference type="InterPro" id="IPR025670">
    <property type="entry name" value="Fox-1_C_dom"/>
</dbReference>
<dbReference type="InterPro" id="IPR034237">
    <property type="entry name" value="FOX1_RRM"/>
</dbReference>
<dbReference type="InterPro" id="IPR012677">
    <property type="entry name" value="Nucleotide-bd_a/b_plait_sf"/>
</dbReference>
<dbReference type="InterPro" id="IPR035979">
    <property type="entry name" value="RBD_domain_sf"/>
</dbReference>
<dbReference type="InterPro" id="IPR017325">
    <property type="entry name" value="RBFOX1-3"/>
</dbReference>
<dbReference type="InterPro" id="IPR047131">
    <property type="entry name" value="RBFOX1-like"/>
</dbReference>
<dbReference type="InterPro" id="IPR000504">
    <property type="entry name" value="RRM_dom"/>
</dbReference>
<dbReference type="PANTHER" id="PTHR15597">
    <property type="entry name" value="ATAXIN 2-BINDING PROTEIN 1-RELATED"/>
    <property type="match status" value="1"/>
</dbReference>
<dbReference type="PANTHER" id="PTHR15597:SF45">
    <property type="entry name" value="RNA BINDING PROTEIN FOX-1 HOMOLOG 1"/>
    <property type="match status" value="1"/>
</dbReference>
<dbReference type="Pfam" id="PF12414">
    <property type="entry name" value="Fox-1_C"/>
    <property type="match status" value="1"/>
</dbReference>
<dbReference type="Pfam" id="PF00076">
    <property type="entry name" value="RRM_1"/>
    <property type="match status" value="1"/>
</dbReference>
<dbReference type="PIRSF" id="PIRSF037932">
    <property type="entry name" value="Ataxin_2_bd_A2BP"/>
    <property type="match status" value="1"/>
</dbReference>
<dbReference type="SMART" id="SM00360">
    <property type="entry name" value="RRM"/>
    <property type="match status" value="1"/>
</dbReference>
<dbReference type="SUPFAM" id="SSF54928">
    <property type="entry name" value="RNA-binding domain, RBD"/>
    <property type="match status" value="1"/>
</dbReference>
<dbReference type="PROSITE" id="PS50102">
    <property type="entry name" value="RRM"/>
    <property type="match status" value="1"/>
</dbReference>
<evidence type="ECO:0000250" key="1"/>
<evidence type="ECO:0000250" key="2">
    <source>
        <dbReference type="UniProtKB" id="Q9JJ43"/>
    </source>
</evidence>
<evidence type="ECO:0000255" key="3">
    <source>
        <dbReference type="PROSITE-ProRule" id="PRU00176"/>
    </source>
</evidence>
<evidence type="ECO:0000256" key="4">
    <source>
        <dbReference type="SAM" id="MobiDB-lite"/>
    </source>
</evidence>
<evidence type="ECO:0000269" key="5">
    <source>
    </source>
</evidence>
<evidence type="ECO:0000269" key="6">
    <source>
    </source>
</evidence>
<evidence type="ECO:0000303" key="7">
    <source>
    </source>
</evidence>
<evidence type="ECO:0000303" key="8">
    <source>
    </source>
</evidence>
<evidence type="ECO:0000303" key="9">
    <source>
    </source>
</evidence>
<evidence type="ECO:0000303" key="10">
    <source ref="2"/>
</evidence>
<evidence type="ECO:0000303" key="11">
    <source ref="3"/>
</evidence>
<evidence type="ECO:0000305" key="12"/>
<evidence type="ECO:0007829" key="13">
    <source>
        <dbReference type="PDB" id="2N82"/>
    </source>
</evidence>
<evidence type="ECO:0007829" key="14">
    <source>
        <dbReference type="PDB" id="4ZKA"/>
    </source>
</evidence>
<reference key="1">
    <citation type="journal article" date="2000" name="Hum. Mol. Genet.">
        <title>A novel protein with RNA-binding motifs interacts with ataxin-2.</title>
        <authorList>
            <person name="Shibata H."/>
            <person name="Huynh D.P."/>
            <person name="Pulst S.-M."/>
        </authorList>
    </citation>
    <scope>NUCLEOTIDE SEQUENCE [MRNA] (ISOFORM 1)</scope>
    <scope>INTERACTION WITH ATXN2</scope>
</reference>
<reference key="2">
    <citation type="submission" date="1998-09" db="EMBL/GenBank/DDBJ databases">
        <title>Molecular cloning and chromosomal localization of a human brain, heart and skeletal muscle specific RNA binding protein gene homologous to fox-1 in Caenorhabditis elegans.</title>
        <authorList>
            <person name="Chen W."/>
            <person name="Chu Z.-L."/>
            <person name="Blough R.I."/>
            <person name="Liu L."/>
            <person name="Hoppes B."/>
            <person name="Winkelmann J.C."/>
        </authorList>
    </citation>
    <scope>NUCLEOTIDE SEQUENCE [GENOMIC DNA / MRNA] (ISOFORMS 2; 4 AND 5)</scope>
</reference>
<reference key="3">
    <citation type="submission" date="2001-11" db="EMBL/GenBank/DDBJ databases">
        <title>An alternative splicing of a novel protein with RNA-binding motifs interacts with ataxin-2.</title>
        <authorList>
            <person name="Yu L."/>
            <person name="Guo J."/>
            <person name="She X."/>
        </authorList>
    </citation>
    <scope>NUCLEOTIDE SEQUENCE [MRNA] (ISOFORM 3)</scope>
</reference>
<reference key="4">
    <citation type="journal article" date="2004" name="Nat. Genet.">
        <title>Complete sequencing and characterization of 21,243 full-length human cDNAs.</title>
        <authorList>
            <person name="Ota T."/>
            <person name="Suzuki Y."/>
            <person name="Nishikawa T."/>
            <person name="Otsuki T."/>
            <person name="Sugiyama T."/>
            <person name="Irie R."/>
            <person name="Wakamatsu A."/>
            <person name="Hayashi K."/>
            <person name="Sato H."/>
            <person name="Nagai K."/>
            <person name="Kimura K."/>
            <person name="Makita H."/>
            <person name="Sekine M."/>
            <person name="Obayashi M."/>
            <person name="Nishi T."/>
            <person name="Shibahara T."/>
            <person name="Tanaka T."/>
            <person name="Ishii S."/>
            <person name="Yamamoto J."/>
            <person name="Saito K."/>
            <person name="Kawai Y."/>
            <person name="Isono Y."/>
            <person name="Nakamura Y."/>
            <person name="Nagahari K."/>
            <person name="Murakami K."/>
            <person name="Yasuda T."/>
            <person name="Iwayanagi T."/>
            <person name="Wagatsuma M."/>
            <person name="Shiratori A."/>
            <person name="Sudo H."/>
            <person name="Hosoiri T."/>
            <person name="Kaku Y."/>
            <person name="Kodaira H."/>
            <person name="Kondo H."/>
            <person name="Sugawara M."/>
            <person name="Takahashi M."/>
            <person name="Kanda K."/>
            <person name="Yokoi T."/>
            <person name="Furuya T."/>
            <person name="Kikkawa E."/>
            <person name="Omura Y."/>
            <person name="Abe K."/>
            <person name="Kamihara K."/>
            <person name="Katsuta N."/>
            <person name="Sato K."/>
            <person name="Tanikawa M."/>
            <person name="Yamazaki M."/>
            <person name="Ninomiya K."/>
            <person name="Ishibashi T."/>
            <person name="Yamashita H."/>
            <person name="Murakawa K."/>
            <person name="Fujimori K."/>
            <person name="Tanai H."/>
            <person name="Kimata M."/>
            <person name="Watanabe M."/>
            <person name="Hiraoka S."/>
            <person name="Chiba Y."/>
            <person name="Ishida S."/>
            <person name="Ono Y."/>
            <person name="Takiguchi S."/>
            <person name="Watanabe S."/>
            <person name="Yosida M."/>
            <person name="Hotuta T."/>
            <person name="Kusano J."/>
            <person name="Kanehori K."/>
            <person name="Takahashi-Fujii A."/>
            <person name="Hara H."/>
            <person name="Tanase T.-O."/>
            <person name="Nomura Y."/>
            <person name="Togiya S."/>
            <person name="Komai F."/>
            <person name="Hara R."/>
            <person name="Takeuchi K."/>
            <person name="Arita M."/>
            <person name="Imose N."/>
            <person name="Musashino K."/>
            <person name="Yuuki H."/>
            <person name="Oshima A."/>
            <person name="Sasaki N."/>
            <person name="Aotsuka S."/>
            <person name="Yoshikawa Y."/>
            <person name="Matsunawa H."/>
            <person name="Ichihara T."/>
            <person name="Shiohata N."/>
            <person name="Sano S."/>
            <person name="Moriya S."/>
            <person name="Momiyama H."/>
            <person name="Satoh N."/>
            <person name="Takami S."/>
            <person name="Terashima Y."/>
            <person name="Suzuki O."/>
            <person name="Nakagawa S."/>
            <person name="Senoh A."/>
            <person name="Mizoguchi H."/>
            <person name="Goto Y."/>
            <person name="Shimizu F."/>
            <person name="Wakebe H."/>
            <person name="Hishigaki H."/>
            <person name="Watanabe T."/>
            <person name="Sugiyama A."/>
            <person name="Takemoto M."/>
            <person name="Kawakami B."/>
            <person name="Yamazaki M."/>
            <person name="Watanabe K."/>
            <person name="Kumagai A."/>
            <person name="Itakura S."/>
            <person name="Fukuzumi Y."/>
            <person name="Fujimori Y."/>
            <person name="Komiyama M."/>
            <person name="Tashiro H."/>
            <person name="Tanigami A."/>
            <person name="Fujiwara T."/>
            <person name="Ono T."/>
            <person name="Yamada K."/>
            <person name="Fujii Y."/>
            <person name="Ozaki K."/>
            <person name="Hirao M."/>
            <person name="Ohmori Y."/>
            <person name="Kawabata A."/>
            <person name="Hikiji T."/>
            <person name="Kobatake N."/>
            <person name="Inagaki H."/>
            <person name="Ikema Y."/>
            <person name="Okamoto S."/>
            <person name="Okitani R."/>
            <person name="Kawakami T."/>
            <person name="Noguchi S."/>
            <person name="Itoh T."/>
            <person name="Shigeta K."/>
            <person name="Senba T."/>
            <person name="Matsumura K."/>
            <person name="Nakajima Y."/>
            <person name="Mizuno T."/>
            <person name="Morinaga M."/>
            <person name="Sasaki M."/>
            <person name="Togashi T."/>
            <person name="Oyama M."/>
            <person name="Hata H."/>
            <person name="Watanabe M."/>
            <person name="Komatsu T."/>
            <person name="Mizushima-Sugano J."/>
            <person name="Satoh T."/>
            <person name="Shirai Y."/>
            <person name="Takahashi Y."/>
            <person name="Nakagawa K."/>
            <person name="Okumura K."/>
            <person name="Nagase T."/>
            <person name="Nomura N."/>
            <person name="Kikuchi H."/>
            <person name="Masuho Y."/>
            <person name="Yamashita R."/>
            <person name="Nakai K."/>
            <person name="Yada T."/>
            <person name="Nakamura Y."/>
            <person name="Ohara O."/>
            <person name="Isogai T."/>
            <person name="Sugano S."/>
        </authorList>
    </citation>
    <scope>NUCLEOTIDE SEQUENCE [LARGE SCALE MRNA] (ISOFORM 1)</scope>
</reference>
<reference key="5">
    <citation type="journal article" date="2004" name="Nature">
        <title>The sequence and analysis of duplication-rich human chromosome 16.</title>
        <authorList>
            <person name="Martin J."/>
            <person name="Han C."/>
            <person name="Gordon L.A."/>
            <person name="Terry A."/>
            <person name="Prabhakar S."/>
            <person name="She X."/>
            <person name="Xie G."/>
            <person name="Hellsten U."/>
            <person name="Chan Y.M."/>
            <person name="Altherr M."/>
            <person name="Couronne O."/>
            <person name="Aerts A."/>
            <person name="Bajorek E."/>
            <person name="Black S."/>
            <person name="Blumer H."/>
            <person name="Branscomb E."/>
            <person name="Brown N.C."/>
            <person name="Bruno W.J."/>
            <person name="Buckingham J.M."/>
            <person name="Callen D.F."/>
            <person name="Campbell C.S."/>
            <person name="Campbell M.L."/>
            <person name="Campbell E.W."/>
            <person name="Caoile C."/>
            <person name="Challacombe J.F."/>
            <person name="Chasteen L.A."/>
            <person name="Chertkov O."/>
            <person name="Chi H.C."/>
            <person name="Christensen M."/>
            <person name="Clark L.M."/>
            <person name="Cohn J.D."/>
            <person name="Denys M."/>
            <person name="Detter J.C."/>
            <person name="Dickson M."/>
            <person name="Dimitrijevic-Bussod M."/>
            <person name="Escobar J."/>
            <person name="Fawcett J.J."/>
            <person name="Flowers D."/>
            <person name="Fotopulos D."/>
            <person name="Glavina T."/>
            <person name="Gomez M."/>
            <person name="Gonzales E."/>
            <person name="Goodstein D."/>
            <person name="Goodwin L.A."/>
            <person name="Grady D.L."/>
            <person name="Grigoriev I."/>
            <person name="Groza M."/>
            <person name="Hammon N."/>
            <person name="Hawkins T."/>
            <person name="Haydu L."/>
            <person name="Hildebrand C.E."/>
            <person name="Huang W."/>
            <person name="Israni S."/>
            <person name="Jett J."/>
            <person name="Jewett P.B."/>
            <person name="Kadner K."/>
            <person name="Kimball H."/>
            <person name="Kobayashi A."/>
            <person name="Krawczyk M.-C."/>
            <person name="Leyba T."/>
            <person name="Longmire J.L."/>
            <person name="Lopez F."/>
            <person name="Lou Y."/>
            <person name="Lowry S."/>
            <person name="Ludeman T."/>
            <person name="Manohar C.F."/>
            <person name="Mark G.A."/>
            <person name="McMurray K.L."/>
            <person name="Meincke L.J."/>
            <person name="Morgan J."/>
            <person name="Moyzis R.K."/>
            <person name="Mundt M.O."/>
            <person name="Munk A.C."/>
            <person name="Nandkeshwar R.D."/>
            <person name="Pitluck S."/>
            <person name="Pollard M."/>
            <person name="Predki P."/>
            <person name="Parson-Quintana B."/>
            <person name="Ramirez L."/>
            <person name="Rash S."/>
            <person name="Retterer J."/>
            <person name="Ricke D.O."/>
            <person name="Robinson D.L."/>
            <person name="Rodriguez A."/>
            <person name="Salamov A."/>
            <person name="Saunders E.H."/>
            <person name="Scott D."/>
            <person name="Shough T."/>
            <person name="Stallings R.L."/>
            <person name="Stalvey M."/>
            <person name="Sutherland R.D."/>
            <person name="Tapia R."/>
            <person name="Tesmer J.G."/>
            <person name="Thayer N."/>
            <person name="Thompson L.S."/>
            <person name="Tice H."/>
            <person name="Torney D.C."/>
            <person name="Tran-Gyamfi M."/>
            <person name="Tsai M."/>
            <person name="Ulanovsky L.E."/>
            <person name="Ustaszewska A."/>
            <person name="Vo N."/>
            <person name="White P.S."/>
            <person name="Williams A.L."/>
            <person name="Wills P.L."/>
            <person name="Wu J.-R."/>
            <person name="Wu K."/>
            <person name="Yang J."/>
            <person name="DeJong P."/>
            <person name="Bruce D."/>
            <person name="Doggett N.A."/>
            <person name="Deaven L."/>
            <person name="Schmutz J."/>
            <person name="Grimwood J."/>
            <person name="Richardson P."/>
            <person name="Rokhsar D.S."/>
            <person name="Eichler E.E."/>
            <person name="Gilna P."/>
            <person name="Lucas S.M."/>
            <person name="Myers R.M."/>
            <person name="Rubin E.M."/>
            <person name="Pennacchio L.A."/>
        </authorList>
    </citation>
    <scope>NUCLEOTIDE SEQUENCE [LARGE SCALE GENOMIC DNA]</scope>
</reference>
<reference key="6">
    <citation type="journal article" date="2004" name="Genome Res.">
        <title>The status, quality, and expansion of the NIH full-length cDNA project: the Mammalian Gene Collection (MGC).</title>
        <authorList>
            <consortium name="The MGC Project Team"/>
        </authorList>
    </citation>
    <scope>NUCLEOTIDE SEQUENCE [LARGE SCALE MRNA] (ISOFORM 5)</scope>
</reference>
<reference key="7">
    <citation type="journal article" date="2006" name="J. Biol. Chem.">
        <title>Fox-2 splicing factor binds to a conserved intron motif to promote inclusion of protein 4.1R alternative exon 16.</title>
        <authorList>
            <person name="Ponthier J.L."/>
            <person name="Schluepen C."/>
            <person name="Chen W."/>
            <person name="Lersch R.A."/>
            <person name="Gee S.L."/>
            <person name="Hou V.C."/>
            <person name="Lo A.J."/>
            <person name="Short S.A."/>
            <person name="Chasis J.A."/>
            <person name="Winkelmann J.C."/>
            <person name="Conboy J.G."/>
        </authorList>
    </citation>
    <scope>FUNCTION</scope>
</reference>
<reference key="8">
    <citation type="journal article" date="2006" name="EMBO J.">
        <title>Molecular basis of RNA recognition by the human alternative splicing factor Fox-1.</title>
        <authorList>
            <person name="Auweter S.D."/>
            <person name="Fasan R."/>
            <person name="Reymond L."/>
            <person name="Underwood J.G."/>
            <person name="Black D.L."/>
            <person name="Pitsch S."/>
            <person name="Allain F.H.-T."/>
        </authorList>
    </citation>
    <scope>STRUCTURE BY NMR OF 109-196 IN COMPLEX WITH RNA</scope>
    <scope>MUTAGENESIS OF HIS-120; PHE-126; PHE-158 AND PHE-160</scope>
</reference>
<proteinExistence type="evidence at protein level"/>
<accession>Q9NWB1</accession>
<accession>Q7Z7I7</accession>
<accession>Q8TAE3</accession>
<accession>Q8TAF2</accession>
<accession>Q8WYB2</accession>
<accession>Q9NS20</accession>
<name>RFOX1_HUMAN</name>
<sequence length="397" mass="42784">MNCEREQLRGNQEAAAAPDTMAQPYASAQFAPPQNGIPAEYTAPHPHPAPEYTGQTTVPEHTLNLYPPAQTHSEQSPADTSAQTVSGTATQTDDAAPTDGQPQTQPSENTENKSQPKRLHVSNIPFRFRDPDLRQMFGQFGKILDVEIIFNERGSKGFGFVTFENSADADRAREKLHGTVVEGRKIEVNNATARVMTNKKTVNPYTNGWKLNPVVGAVYSPEFYAGTVLLCQANQEGSSMYSAPSSLVYTSAMPGFPYPAATAAAAYRGAHLRGRGRTVYNTFRAAAPPPPIPAYGGVVYQDGFYGADIYGGYAAYRYAQPTPATAAAYSDSYGRVYAADPYHHALAPAPTYGVGAMNAFAPLTDAKTRSHADDVGLVLSSLQASIYRGGYNRFAPY</sequence>
<organism>
    <name type="scientific">Homo sapiens</name>
    <name type="common">Human</name>
    <dbReference type="NCBI Taxonomy" id="9606"/>
    <lineage>
        <taxon>Eukaryota</taxon>
        <taxon>Metazoa</taxon>
        <taxon>Chordata</taxon>
        <taxon>Craniata</taxon>
        <taxon>Vertebrata</taxon>
        <taxon>Euteleostomi</taxon>
        <taxon>Mammalia</taxon>
        <taxon>Eutheria</taxon>
        <taxon>Euarchontoglires</taxon>
        <taxon>Primates</taxon>
        <taxon>Haplorrhini</taxon>
        <taxon>Catarrhini</taxon>
        <taxon>Hominidae</taxon>
        <taxon>Homo</taxon>
    </lineage>
</organism>
<gene>
    <name type="primary">RBFOX1</name>
    <name type="synonym">A2BP</name>
    <name type="synonym">A2BP1</name>
    <name type="synonym">FOX1</name>
    <name type="synonym">HRNBP1</name>
</gene>
<comment type="function">
    <text evidence="6">RNA-binding protein that regulates alternative splicing events by binding to 5'-UGCAUGU-3' elements. Regulates alternative splicing of tissue-specific exons and of differentially spliced exons during erythropoiesis.</text>
</comment>
<comment type="subunit">
    <text evidence="5">Binds to the C-terminus of ATXN2.</text>
</comment>
<comment type="interaction">
    <interactant intactId="EBI-945906">
        <id>Q9NWB1</id>
    </interactant>
    <interactant intactId="EBI-945980">
        <id>P54259</id>
        <label>ATN1</label>
    </interactant>
    <organismsDiffer>false</organismsDiffer>
    <experiments>2</experiments>
</comment>
<comment type="interaction">
    <interactant intactId="EBI-945906">
        <id>Q9NWB1</id>
    </interactant>
    <interactant intactId="EBI-930964">
        <id>P54253</id>
        <label>ATXN1</label>
    </interactant>
    <organismsDiffer>false</organismsDiffer>
    <experiments>2</experiments>
</comment>
<comment type="interaction">
    <interactant intactId="EBI-945906">
        <id>Q9NWB1</id>
    </interactant>
    <interactant intactId="EBI-946029">
        <id>Q6P1W5</id>
        <label>C1orf94</label>
    </interactant>
    <organismsDiffer>false</organismsDiffer>
    <experiments>3</experiments>
</comment>
<comment type="interaction">
    <interactant intactId="EBI-945906">
        <id>Q9NWB1</id>
    </interactant>
    <interactant intactId="EBI-945925">
        <id>Q9Y6R0</id>
        <label>NUMBL</label>
    </interactant>
    <organismsDiffer>false</organismsDiffer>
    <experiments>2</experiments>
</comment>
<comment type="interaction">
    <interactant intactId="EBI-945906">
        <id>Q9NWB1</id>
    </interactant>
    <interactant intactId="EBI-945934">
        <id>Q9HAU0</id>
        <label>PLEKHA5</label>
    </interactant>
    <organismsDiffer>false</organismsDiffer>
    <experiments>2</experiments>
</comment>
<comment type="interaction">
    <interactant intactId="EBI-945906">
        <id>Q9NWB1</id>
    </interactant>
    <interactant intactId="EBI-945916">
        <id>Q92530</id>
        <label>PSMF1</label>
    </interactant>
    <organismsDiffer>false</organismsDiffer>
    <experiments>2</experiments>
</comment>
<comment type="interaction">
    <interactant intactId="EBI-945906">
        <id>Q9NWB1</id>
    </interactant>
    <interactant intactId="EBI-945792">
        <id>Q96PU8</id>
        <label>QKI</label>
    </interactant>
    <organismsDiffer>false</organismsDiffer>
    <experiments>2</experiments>
</comment>
<comment type="interaction">
    <interactant intactId="EBI-945906">
        <id>Q9NWB1</id>
    </interactant>
    <interactant intactId="EBI-746056">
        <id>O43251</id>
        <label>RBFOX2</label>
    </interactant>
    <organismsDiffer>false</organismsDiffer>
    <experiments>2</experiments>
</comment>
<comment type="interaction">
    <interactant intactId="EBI-945906">
        <id>Q9NWB1</id>
    </interactant>
    <interactant intactId="EBI-740322">
        <id>Q93062</id>
        <label>RBPMS</label>
    </interactant>
    <organismsDiffer>false</organismsDiffer>
    <experiments>3</experiments>
</comment>
<comment type="interaction">
    <interactant intactId="EBI-12123390">
        <id>Q9NWB1-5</id>
    </interactant>
    <interactant intactId="EBI-712648">
        <id>O95994</id>
        <label>AGR2</label>
    </interactant>
    <organismsDiffer>false</organismsDiffer>
    <experiments>3</experiments>
</comment>
<comment type="interaction">
    <interactant intactId="EBI-12123390">
        <id>Q9NWB1-5</id>
    </interactant>
    <interactant intactId="EBI-948603">
        <id>Q03989</id>
        <label>ARID5A</label>
    </interactant>
    <organismsDiffer>false</organismsDiffer>
    <experiments>3</experiments>
</comment>
<comment type="interaction">
    <interactant intactId="EBI-12123390">
        <id>Q9NWB1-5</id>
    </interactant>
    <interactant intactId="EBI-11954292">
        <id>Q86V38</id>
        <label>ATN1</label>
    </interactant>
    <organismsDiffer>false</organismsDiffer>
    <experiments>3</experiments>
</comment>
<comment type="interaction">
    <interactant intactId="EBI-12123390">
        <id>Q9NWB1-5</id>
    </interactant>
    <interactant intactId="EBI-930964">
        <id>P54253</id>
        <label>ATXN1</label>
    </interactant>
    <organismsDiffer>false</organismsDiffer>
    <experiments>6</experiments>
</comment>
<comment type="interaction">
    <interactant intactId="EBI-12123390">
        <id>Q9NWB1-5</id>
    </interactant>
    <interactant intactId="EBI-8624731">
        <id>P0C7T5</id>
        <label>ATXN1L</label>
    </interactant>
    <organismsDiffer>false</organismsDiffer>
    <experiments>3</experiments>
</comment>
<comment type="interaction">
    <interactant intactId="EBI-12123390">
        <id>Q9NWB1-5</id>
    </interactant>
    <interactant intactId="EBI-25891409">
        <id>Q99700-5</id>
        <label>ATXN2</label>
    </interactant>
    <organismsDiffer>false</organismsDiffer>
    <experiments>3</experiments>
</comment>
<comment type="interaction">
    <interactant intactId="EBI-12123390">
        <id>Q9NWB1-5</id>
    </interactant>
    <interactant intactId="EBI-711810">
        <id>O14503</id>
        <label>BHLHE40</label>
    </interactant>
    <organismsDiffer>false</organismsDiffer>
    <experiments>3</experiments>
</comment>
<comment type="interaction">
    <interactant intactId="EBI-12123390">
        <id>Q9NWB1-5</id>
    </interactant>
    <interactant intactId="EBI-6875961">
        <id>P02489</id>
        <label>CRYAA</label>
    </interactant>
    <organismsDiffer>false</organismsDiffer>
    <experiments>3</experiments>
</comment>
<comment type="interaction">
    <interactant intactId="EBI-12123390">
        <id>Q9NWB1-5</id>
    </interactant>
    <interactant intactId="EBI-724310">
        <id>Q15038</id>
        <label>DAZAP2</label>
    </interactant>
    <organismsDiffer>false</organismsDiffer>
    <experiments>4</experiments>
</comment>
<comment type="interaction">
    <interactant intactId="EBI-12123390">
        <id>Q9NWB1-5</id>
    </interactant>
    <interactant intactId="EBI-10976677">
        <id>G5E9A7</id>
        <label>DMWD</label>
    </interactant>
    <organismsDiffer>false</organismsDiffer>
    <experiments>3</experiments>
</comment>
<comment type="interaction">
    <interactant intactId="EBI-12123390">
        <id>Q9NWB1-5</id>
    </interactant>
    <interactant intactId="EBI-11978259">
        <id>Q92567-2</id>
        <label>FAM168A</label>
    </interactant>
    <organismsDiffer>false</organismsDiffer>
    <experiments>4</experiments>
</comment>
<comment type="interaction">
    <interactant intactId="EBI-12123390">
        <id>Q9NWB1-5</id>
    </interactant>
    <interactant intactId="EBI-348399">
        <id>P22607</id>
        <label>FGFR3</label>
    </interactant>
    <organismsDiffer>false</organismsDiffer>
    <experiments>3</experiments>
</comment>
<comment type="interaction">
    <interactant intactId="EBI-12123390">
        <id>Q9NWB1-5</id>
    </interactant>
    <interactant intactId="EBI-2432309">
        <id>Q92876</id>
        <label>KLK6</label>
    </interactant>
    <organismsDiffer>false</organismsDiffer>
    <experiments>3</experiments>
</comment>
<comment type="interaction">
    <interactant intactId="EBI-12123390">
        <id>Q9NWB1-5</id>
    </interactant>
    <interactant intactId="EBI-9088686">
        <id>Q14847-2</id>
        <label>LASP1</label>
    </interactant>
    <organismsDiffer>false</organismsDiffer>
    <experiments>3</experiments>
</comment>
<comment type="interaction">
    <interactant intactId="EBI-12123390">
        <id>Q9NWB1-5</id>
    </interactant>
    <interactant intactId="EBI-351935">
        <id>P02545</id>
        <label>LMNA</label>
    </interactant>
    <organismsDiffer>false</organismsDiffer>
    <experiments>3</experiments>
</comment>
<comment type="interaction">
    <interactant intactId="EBI-12123390">
        <id>Q9NWB1-5</id>
    </interactant>
    <interactant intactId="EBI-10181968">
        <id>Q7Z4N8</id>
        <label>P4HA3</label>
    </interactant>
    <organismsDiffer>false</organismsDiffer>
    <experiments>3</experiments>
</comment>
<comment type="interaction">
    <interactant intactId="EBI-12123390">
        <id>Q9NWB1-5</id>
    </interactant>
    <interactant intactId="EBI-1389308">
        <id>Q7Z3K3</id>
        <label>POGZ</label>
    </interactant>
    <organismsDiffer>false</organismsDiffer>
    <experiments>5</experiments>
</comment>
<comment type="interaction">
    <interactant intactId="EBI-12123390">
        <id>Q9NWB1-5</id>
    </interactant>
    <interactant intactId="EBI-2823850">
        <id>A0AV96</id>
        <label>RBM47</label>
    </interactant>
    <organismsDiffer>false</organismsDiffer>
    <experiments>3</experiments>
</comment>
<comment type="interaction">
    <interactant intactId="EBI-12123390">
        <id>Q9NWB1-5</id>
    </interactant>
    <interactant intactId="EBI-740343">
        <id>Q93062-3</id>
        <label>RBPMS</label>
    </interactant>
    <organismsDiffer>false</organismsDiffer>
    <experiments>4</experiments>
</comment>
<comment type="interaction">
    <interactant intactId="EBI-12123390">
        <id>Q9NWB1-5</id>
    </interactant>
    <interactant intactId="EBI-11987469">
        <id>Q6ZRY4</id>
        <label>RBPMS2</label>
    </interactant>
    <organismsDiffer>false</organismsDiffer>
    <experiments>3</experiments>
</comment>
<comment type="interaction">
    <interactant intactId="EBI-12123390">
        <id>Q9NWB1-5</id>
    </interactant>
    <interactant intactId="EBI-10179231">
        <id>O00241-2</id>
        <label>SIRPB1</label>
    </interactant>
    <organismsDiffer>false</organismsDiffer>
    <experiments>3</experiments>
</comment>
<comment type="interaction">
    <interactant intactId="EBI-12123390">
        <id>Q9NWB1-5</id>
    </interactant>
    <interactant intactId="EBI-743976">
        <id>Q96LM6</id>
        <label>SPMIP9</label>
    </interactant>
    <organismsDiffer>false</organismsDiffer>
    <experiments>3</experiments>
</comment>
<comment type="interaction">
    <interactant intactId="EBI-12123390">
        <id>Q9NWB1-5</id>
    </interactant>
    <interactant intactId="EBI-16433759">
        <id>A0A0S2Z5K8</id>
        <label>STRBP</label>
    </interactant>
    <organismsDiffer>false</organismsDiffer>
    <experiments>3</experiments>
</comment>
<comment type="interaction">
    <interactant intactId="EBI-12123390">
        <id>Q9NWB1-5</id>
    </interactant>
    <interactant intactId="EBI-740355">
        <id>Q96SI9</id>
        <label>STRBP</label>
    </interactant>
    <organismsDiffer>false</organismsDiffer>
    <experiments>3</experiments>
</comment>
<comment type="interaction">
    <interactant intactId="EBI-12123390">
        <id>Q9NWB1-5</id>
    </interactant>
    <interactant intactId="EBI-74615">
        <id>Q9H0E2</id>
        <label>TOLLIP</label>
    </interactant>
    <organismsDiffer>false</organismsDiffer>
    <experiments>3</experiments>
</comment>
<comment type="interaction">
    <interactant intactId="EBI-12123390">
        <id>Q9NWB1-5</id>
    </interactant>
    <interactant intactId="EBI-12806590">
        <id>Q86WV8</id>
        <label>TSC1</label>
    </interactant>
    <organismsDiffer>false</organismsDiffer>
    <experiments>3</experiments>
</comment>
<comment type="interaction">
    <interactant intactId="EBI-12123390">
        <id>Q9NWB1-5</id>
    </interactant>
    <interactant intactId="EBI-12876508">
        <id>O95164</id>
        <label>UBL3</label>
    </interactant>
    <organismsDiffer>false</organismsDiffer>
    <experiments>3</experiments>
</comment>
<comment type="interaction">
    <interactant intactId="EBI-12123390">
        <id>Q9NWB1-5</id>
    </interactant>
    <interactant intactId="EBI-10191303">
        <id>O95231</id>
        <label>VENTX</label>
    </interactant>
    <organismsDiffer>false</organismsDiffer>
    <experiments>3</experiments>
</comment>
<comment type="subcellular location">
    <subcellularLocation>
        <location evidence="1">Nucleus</location>
    </subcellularLocation>
    <subcellularLocation>
        <location evidence="1">Cytoplasm</location>
    </subcellularLocation>
</comment>
<comment type="alternative products">
    <event type="alternative splicing"/>
    <isoform>
        <id>Q9NWB1-1</id>
        <name>1</name>
        <sequence type="displayed"/>
    </isoform>
    <isoform>
        <id>Q9NWB1-2</id>
        <name>2</name>
        <name>Gamma</name>
        <sequence type="described" ref="VSP_030874 VSP_030876"/>
    </isoform>
    <isoform>
        <id>Q9NWB1-3</id>
        <name>3</name>
        <name>1</name>
        <sequence type="described" ref="VSP_030875"/>
    </isoform>
    <isoform>
        <id>Q9NWB1-4</id>
        <name>4</name>
        <name>Alpha</name>
        <sequence type="described" ref="VSP_030874 VSP_030876 VSP_030878"/>
    </isoform>
    <isoform>
        <id>Q9NWB1-5</id>
        <name>5</name>
        <name>Beta</name>
        <sequence type="described" ref="VSP_030874 VSP_030876 VSP_030877"/>
    </isoform>
</comment>
<comment type="tissue specificity">
    <text>Predominantly expressed in muscle and brain.</text>
</comment>
<comment type="sequence caution" evidence="12">
    <conflict type="erroneous initiation">
        <sequence resource="EMBL-CDS" id="AAF78291"/>
    </conflict>
    <text>Truncated N-terminus.</text>
</comment>
<keyword id="KW-0002">3D-structure</keyword>
<keyword id="KW-0025">Alternative splicing</keyword>
<keyword id="KW-0963">Cytoplasm</keyword>
<keyword id="KW-0488">Methylation</keyword>
<keyword id="KW-0507">mRNA processing</keyword>
<keyword id="KW-0508">mRNA splicing</keyword>
<keyword id="KW-0539">Nucleus</keyword>
<keyword id="KW-1267">Proteomics identification</keyword>
<keyword id="KW-1185">Reference proteome</keyword>
<keyword id="KW-0694">RNA-binding</keyword>
<protein>
    <recommendedName>
        <fullName>RNA binding protein fox-1 homolog 1</fullName>
    </recommendedName>
    <alternativeName>
        <fullName>Ataxin-2-binding protein 1</fullName>
    </alternativeName>
    <alternativeName>
        <fullName>Fox-1 homolog A</fullName>
    </alternativeName>
    <alternativeName>
        <fullName>Hexaribonucleotide-binding protein 1</fullName>
    </alternativeName>
</protein>
<feature type="chain" id="PRO_0000081480" description="RNA binding protein fox-1 homolog 1">
    <location>
        <begin position="1"/>
        <end position="397"/>
    </location>
</feature>
<feature type="domain" description="RRM" evidence="3">
    <location>
        <begin position="117"/>
        <end position="193"/>
    </location>
</feature>
<feature type="region of interest" description="Disordered" evidence="4">
    <location>
        <begin position="1"/>
        <end position="121"/>
    </location>
</feature>
<feature type="compositionally biased region" description="Polar residues" evidence="4">
    <location>
        <begin position="70"/>
        <end position="87"/>
    </location>
</feature>
<feature type="compositionally biased region" description="Low complexity" evidence="4">
    <location>
        <begin position="88"/>
        <end position="99"/>
    </location>
</feature>
<feature type="compositionally biased region" description="Polar residues" evidence="4">
    <location>
        <begin position="100"/>
        <end position="113"/>
    </location>
</feature>
<feature type="site" description="Interaction with RNA">
    <location>
        <position position="118"/>
    </location>
</feature>
<feature type="site" description="Interaction with RNA">
    <location>
        <position position="126"/>
    </location>
</feature>
<feature type="site" description="Interaction with RNA">
    <location>
        <position position="127"/>
    </location>
</feature>
<feature type="site" description="Interaction with RNA">
    <location>
        <position position="151"/>
    </location>
</feature>
<feature type="site" description="Interaction with RNA">
    <location>
        <position position="156"/>
    </location>
</feature>
<feature type="site" description="Interaction with RNA">
    <location>
        <position position="160"/>
    </location>
</feature>
<feature type="site" description="Interaction with RNA">
    <location>
        <position position="184"/>
    </location>
</feature>
<feature type="site" description="Interaction with RNA">
    <location>
        <position position="194"/>
    </location>
</feature>
<feature type="modified residue" description="Asymmetric dimethylarginine" evidence="2">
    <location>
        <position position="317"/>
    </location>
</feature>
<feature type="modified residue" description="Omega-N-methylarginine" evidence="2">
    <location>
        <position position="388"/>
    </location>
</feature>
<feature type="splice variant" id="VSP_030874" description="In isoform 2, isoform 4 and isoform 5." evidence="9 10">
    <original>MNCEREQLR</original>
    <variation>MLASQGVLLHPYGVPMIVPAAPYLPGLIQ</variation>
    <location>
        <begin position="1"/>
        <end position="9"/>
    </location>
</feature>
<feature type="splice variant" id="VSP_030875" description="In isoform 3." evidence="7 8 11">
    <original>GTVLLCQANQEGSSMYSAPSSLVYTSAM</original>
    <variation>V</variation>
    <location>
        <begin position="226"/>
        <end position="253"/>
    </location>
</feature>
<feature type="splice variant" id="VSP_030876" description="In isoform 2, isoform 4 and isoform 5." evidence="9 10">
    <original>DGFYGADIY</original>
    <variation>EPVYGNKLLQ</variation>
    <location>
        <begin position="302"/>
        <end position="310"/>
    </location>
</feature>
<feature type="splice variant" id="VSP_030877" description="In isoform 5." evidence="9 10">
    <original>SYGRVYAADPYHHALAPAPTYGVGAMNAFAPLTDAKTRSHADDVGLVLSSLQASIYRGGYNRFAPY</original>
    <variation>RNQFVFVAADEISCNTSAVTDEFMLPTPTTTHLLQPPPTALVP</variation>
    <location>
        <begin position="332"/>
        <end position="397"/>
    </location>
</feature>
<feature type="splice variant" id="VSP_030878" description="In isoform 4." evidence="10">
    <location>
        <begin position="358"/>
        <end position="383"/>
    </location>
</feature>
<feature type="mutagenesis site" description="Reduces RNA-binding affinity 160-fold." evidence="5">
    <original>H</original>
    <variation>A</variation>
    <location>
        <position position="120"/>
    </location>
</feature>
<feature type="mutagenesis site" description="Reduces RNA-binding affinity 1500-fold." evidence="5">
    <original>F</original>
    <variation>A</variation>
    <variation>I</variation>
    <variation>R</variation>
    <location>
        <position position="126"/>
    </location>
</feature>
<feature type="mutagenesis site" description="Reduces RNA-binding affinity 15-fold." evidence="5">
    <original>F</original>
    <variation>H</variation>
    <variation>W</variation>
    <location>
        <position position="126"/>
    </location>
</feature>
<feature type="mutagenesis site" description="No effect on RNA-binding." evidence="5">
    <original>F</original>
    <variation>Y</variation>
    <location>
        <position position="126"/>
    </location>
</feature>
<feature type="mutagenesis site" description="Reduces RNA-binding affinity 700-fold." evidence="5">
    <original>F</original>
    <variation>A</variation>
    <location>
        <position position="158"/>
    </location>
</feature>
<feature type="mutagenesis site" description="Reduces RNA-binding affinity 30'000-fold." evidence="5">
    <original>F</original>
    <variation>A</variation>
    <location>
        <position position="160"/>
    </location>
</feature>
<feature type="sequence conflict" description="In Ref. 4; BAA91472." evidence="12" ref="4">
    <original>T</original>
    <variation>A</variation>
    <location>
        <position position="92"/>
    </location>
</feature>
<feature type="turn" evidence="13">
    <location>
        <begin position="110"/>
        <end position="112"/>
    </location>
</feature>
<feature type="strand" evidence="14">
    <location>
        <begin position="117"/>
        <end position="123"/>
    </location>
</feature>
<feature type="helix" evidence="14">
    <location>
        <begin position="130"/>
        <end position="138"/>
    </location>
</feature>
<feature type="strand" evidence="14">
    <location>
        <begin position="143"/>
        <end position="151"/>
    </location>
</feature>
<feature type="strand" evidence="14">
    <location>
        <begin position="154"/>
        <end position="165"/>
    </location>
</feature>
<feature type="helix" evidence="14">
    <location>
        <begin position="166"/>
        <end position="176"/>
    </location>
</feature>
<feature type="strand" evidence="14">
    <location>
        <begin position="187"/>
        <end position="190"/>
    </location>
</feature>
<feature type="helix" evidence="13">
    <location>
        <begin position="204"/>
        <end position="206"/>
    </location>
</feature>